<comment type="function">
    <text evidence="1 5">Catalyzes the ATP-dependent amidation of deamido-NAD to form NAD. Uses ammonia as a nitrogen source.</text>
</comment>
<comment type="catalytic activity">
    <reaction evidence="1 5">
        <text>deamido-NAD(+) + NH4(+) + ATP = AMP + diphosphate + NAD(+) + H(+)</text>
        <dbReference type="Rhea" id="RHEA:21188"/>
        <dbReference type="ChEBI" id="CHEBI:15378"/>
        <dbReference type="ChEBI" id="CHEBI:28938"/>
        <dbReference type="ChEBI" id="CHEBI:30616"/>
        <dbReference type="ChEBI" id="CHEBI:33019"/>
        <dbReference type="ChEBI" id="CHEBI:57540"/>
        <dbReference type="ChEBI" id="CHEBI:58437"/>
        <dbReference type="ChEBI" id="CHEBI:456215"/>
        <dbReference type="EC" id="6.3.1.5"/>
    </reaction>
</comment>
<comment type="biophysicochemical properties">
    <kinetics>
        <KM evidence="5">0.62 mM for NH(4)(+)</KM>
        <KM evidence="5">0.28 mM for deamido-NAD</KM>
        <KM evidence="5">0.21 mM for ATP</KM>
    </kinetics>
    <phDependence>
        <text evidence="5">Optimum pH is 8.2-8.7.</text>
    </phDependence>
    <temperatureDependence>
        <text evidence="5">Optimum temperature is 40-45 degrees Celsius.</text>
    </temperatureDependence>
</comment>
<comment type="pathway">
    <text evidence="1 5">Cofactor biosynthesis; NAD(+) biosynthesis; NAD(+) from deamido-NAD(+) (ammonia route): step 1/1.</text>
</comment>
<comment type="subunit">
    <text evidence="1 2 3 5 6 8">Homodimer.</text>
</comment>
<comment type="developmental stage">
    <text evidence="5">Synthesis starts during germination and outgrowth, and is highest at the end of exponential growth. Present in dormant spores.</text>
</comment>
<comment type="induction">
    <text>By heat shock, salt stress, oxidative stress, glucose limitation and oxygen limitation.</text>
</comment>
<comment type="PTM">
    <text evidence="4">Phosphorylated during sporulation.</text>
</comment>
<comment type="similarity">
    <text evidence="1 11">Belongs to the NAD synthetase family.</text>
</comment>
<name>NADE_BACSU</name>
<accession>P08164</accession>
<protein>
    <recommendedName>
        <fullName evidence="1 10">NH(3)-dependent NAD(+) synthetase</fullName>
        <ecNumber evidence="1 5">6.3.1.5</ecNumber>
    </recommendedName>
    <alternativeName>
        <fullName>General stress protein 38</fullName>
        <shortName>GSP38</shortName>
    </alternativeName>
    <alternativeName>
        <fullName>Spore outgrowth factor B</fullName>
    </alternativeName>
    <alternativeName>
        <fullName>Sporulation protein OutB</fullName>
    </alternativeName>
</protein>
<proteinExistence type="evidence at protein level"/>
<reference key="1">
    <citation type="journal article" date="1987" name="J. Bacteriol.">
        <title>Nucleotide sequence of the outB locus of Bacillus subtilis and regulation of its expression.</title>
        <authorList>
            <person name="Albertini A.M."/>
            <person name="Caramori T."/>
            <person name="Henner D.J."/>
            <person name="Ferrari E."/>
            <person name="Galizzi A."/>
        </authorList>
    </citation>
    <scope>NUCLEOTIDE SEQUENCE [GENOMIC DNA]</scope>
</reference>
<reference key="2">
    <citation type="journal article" date="1996" name="Microbiology">
        <title>The 25 degrees-36 degrees region of the Bacillus subtilis chromosome: determination of the sequence of a 146 kb segment and identification of 113 genes.</title>
        <authorList>
            <person name="Yamane K."/>
            <person name="Kumano M."/>
            <person name="Kurita K."/>
        </authorList>
    </citation>
    <scope>NUCLEOTIDE SEQUENCE [GENOMIC DNA]</scope>
    <source>
        <strain>168</strain>
    </source>
</reference>
<reference key="3">
    <citation type="journal article" date="1997" name="Nature">
        <title>The complete genome sequence of the Gram-positive bacterium Bacillus subtilis.</title>
        <authorList>
            <person name="Kunst F."/>
            <person name="Ogasawara N."/>
            <person name="Moszer I."/>
            <person name="Albertini A.M."/>
            <person name="Alloni G."/>
            <person name="Azevedo V."/>
            <person name="Bertero M.G."/>
            <person name="Bessieres P."/>
            <person name="Bolotin A."/>
            <person name="Borchert S."/>
            <person name="Borriss R."/>
            <person name="Boursier L."/>
            <person name="Brans A."/>
            <person name="Braun M."/>
            <person name="Brignell S.C."/>
            <person name="Bron S."/>
            <person name="Brouillet S."/>
            <person name="Bruschi C.V."/>
            <person name="Caldwell B."/>
            <person name="Capuano V."/>
            <person name="Carter N.M."/>
            <person name="Choi S.-K."/>
            <person name="Codani J.-J."/>
            <person name="Connerton I.F."/>
            <person name="Cummings N.J."/>
            <person name="Daniel R.A."/>
            <person name="Denizot F."/>
            <person name="Devine K.M."/>
            <person name="Duesterhoeft A."/>
            <person name="Ehrlich S.D."/>
            <person name="Emmerson P.T."/>
            <person name="Entian K.-D."/>
            <person name="Errington J."/>
            <person name="Fabret C."/>
            <person name="Ferrari E."/>
            <person name="Foulger D."/>
            <person name="Fritz C."/>
            <person name="Fujita M."/>
            <person name="Fujita Y."/>
            <person name="Fuma S."/>
            <person name="Galizzi A."/>
            <person name="Galleron N."/>
            <person name="Ghim S.-Y."/>
            <person name="Glaser P."/>
            <person name="Goffeau A."/>
            <person name="Golightly E.J."/>
            <person name="Grandi G."/>
            <person name="Guiseppi G."/>
            <person name="Guy B.J."/>
            <person name="Haga K."/>
            <person name="Haiech J."/>
            <person name="Harwood C.R."/>
            <person name="Henaut A."/>
            <person name="Hilbert H."/>
            <person name="Holsappel S."/>
            <person name="Hosono S."/>
            <person name="Hullo M.-F."/>
            <person name="Itaya M."/>
            <person name="Jones L.-M."/>
            <person name="Joris B."/>
            <person name="Karamata D."/>
            <person name="Kasahara Y."/>
            <person name="Klaerr-Blanchard M."/>
            <person name="Klein C."/>
            <person name="Kobayashi Y."/>
            <person name="Koetter P."/>
            <person name="Koningstein G."/>
            <person name="Krogh S."/>
            <person name="Kumano M."/>
            <person name="Kurita K."/>
            <person name="Lapidus A."/>
            <person name="Lardinois S."/>
            <person name="Lauber J."/>
            <person name="Lazarevic V."/>
            <person name="Lee S.-M."/>
            <person name="Levine A."/>
            <person name="Liu H."/>
            <person name="Masuda S."/>
            <person name="Mauel C."/>
            <person name="Medigue C."/>
            <person name="Medina N."/>
            <person name="Mellado R.P."/>
            <person name="Mizuno M."/>
            <person name="Moestl D."/>
            <person name="Nakai S."/>
            <person name="Noback M."/>
            <person name="Noone D."/>
            <person name="O'Reilly M."/>
            <person name="Ogawa K."/>
            <person name="Ogiwara A."/>
            <person name="Oudega B."/>
            <person name="Park S.-H."/>
            <person name="Parro V."/>
            <person name="Pohl T.M."/>
            <person name="Portetelle D."/>
            <person name="Porwollik S."/>
            <person name="Prescott A.M."/>
            <person name="Presecan E."/>
            <person name="Pujic P."/>
            <person name="Purnelle B."/>
            <person name="Rapoport G."/>
            <person name="Rey M."/>
            <person name="Reynolds S."/>
            <person name="Rieger M."/>
            <person name="Rivolta C."/>
            <person name="Rocha E."/>
            <person name="Roche B."/>
            <person name="Rose M."/>
            <person name="Sadaie Y."/>
            <person name="Sato T."/>
            <person name="Scanlan E."/>
            <person name="Schleich S."/>
            <person name="Schroeter R."/>
            <person name="Scoffone F."/>
            <person name="Sekiguchi J."/>
            <person name="Sekowska A."/>
            <person name="Seror S.J."/>
            <person name="Serror P."/>
            <person name="Shin B.-S."/>
            <person name="Soldo B."/>
            <person name="Sorokin A."/>
            <person name="Tacconi E."/>
            <person name="Takagi T."/>
            <person name="Takahashi H."/>
            <person name="Takemaru K."/>
            <person name="Takeuchi M."/>
            <person name="Tamakoshi A."/>
            <person name="Tanaka T."/>
            <person name="Terpstra P."/>
            <person name="Tognoni A."/>
            <person name="Tosato V."/>
            <person name="Uchiyama S."/>
            <person name="Vandenbol M."/>
            <person name="Vannier F."/>
            <person name="Vassarotti A."/>
            <person name="Viari A."/>
            <person name="Wambutt R."/>
            <person name="Wedler E."/>
            <person name="Wedler H."/>
            <person name="Weitzenegger T."/>
            <person name="Winters P."/>
            <person name="Wipat A."/>
            <person name="Yamamoto H."/>
            <person name="Yamane K."/>
            <person name="Yasumoto K."/>
            <person name="Yata K."/>
            <person name="Yoshida K."/>
            <person name="Yoshikawa H.-F."/>
            <person name="Zumstein E."/>
            <person name="Yoshikawa H."/>
            <person name="Danchin A."/>
        </authorList>
    </citation>
    <scope>NUCLEOTIDE SEQUENCE [LARGE SCALE GENOMIC DNA]</scope>
    <source>
        <strain>168</strain>
    </source>
</reference>
<reference key="4">
    <citation type="journal article" date="1997" name="Electrophoresis">
        <title>First steps from a two-dimensional protein index towards a response-regulation map for Bacillus subtilis.</title>
        <authorList>
            <person name="Antelmann H."/>
            <person name="Bernhardt J."/>
            <person name="Schmid R."/>
            <person name="Mach H."/>
            <person name="Voelker U."/>
            <person name="Hecker M."/>
        </authorList>
    </citation>
    <scope>PROTEIN SEQUENCE OF 2-19</scope>
    <source>
        <strain>168 / IS58</strain>
    </source>
</reference>
<reference key="5">
    <citation type="journal article" date="1992" name="J. Bacteriol.">
        <title>Identification of proteins phosphorylated by ATP during sporulation of Bacillus subtilis.</title>
        <authorList>
            <person name="Mitchell C."/>
            <person name="Morris P.W."/>
            <person name="Vary J.C."/>
        </authorList>
    </citation>
    <scope>PROTEIN SEQUENCE OF 2-11</scope>
    <scope>PHOSPHORYLATION</scope>
    <source>
        <strain>168 / DB100</strain>
    </source>
</reference>
<reference key="6">
    <citation type="journal article" date="1990" name="J. Bacteriol.">
        <title>The Bacillus subtilis outB gene is highly homologous to an Escherichia coli ntr-like gene.</title>
        <authorList>
            <person name="Albertini A.M."/>
            <person name="Galizzi A."/>
        </authorList>
    </citation>
    <scope>SIMILARITY TO E.COLI NADE</scope>
</reference>
<reference key="7">
    <citation type="journal article" date="1995" name="J. Biol. Chem.">
        <title>The outB gene of Bacillus subtilis codes for NAD synthetase.</title>
        <authorList>
            <person name="Nessi C."/>
            <person name="Albertini A.M."/>
            <person name="Speranza M.L."/>
            <person name="Galizzi A."/>
        </authorList>
    </citation>
    <scope>FUNCTION</scope>
    <scope>CATALYTIC ACTIVITY</scope>
    <scope>BIOPHYSICOCHEMICAL PROPERTIES</scope>
    <scope>PATHWAY</scope>
    <scope>SUBUNIT</scope>
    <scope>DEVELOPMENTAL STAGE</scope>
</reference>
<reference evidence="17" key="8">
    <citation type="journal article" date="1996" name="EMBO J.">
        <title>Crystal structure of NH3-dependent NAD+ synthetase from Bacillus subtilis.</title>
        <authorList>
            <person name="Rizzi M."/>
            <person name="Nessi C."/>
            <person name="Mattevi A."/>
            <person name="Coda A."/>
            <person name="Bolognesi M."/>
            <person name="Galizzi A."/>
        </authorList>
    </citation>
    <scope>X-RAY CRYSTALLOGRAPHY (2.0 ANGSTROMS) IN COMPLEX WITH AMP; ATP AND DIPHOSPHATE</scope>
    <scope>SUBUNIT</scope>
</reference>
<reference evidence="18" key="9">
    <citation type="journal article" date="1998" name="Structure">
        <title>A novel deamido-NAD+-binding site revealed by the trapped NAD-adenylate intermediate in the NAD+ synthetase structure.</title>
        <authorList>
            <person name="Rizzi M."/>
            <person name="Bolognesi M."/>
            <person name="Coda A."/>
        </authorList>
    </citation>
    <scope>X-RAY CRYSTALLOGRAPHY (1.3 ANGSTROMS) IN COMPLEX WITH AMP; NAD AND DIPHOSPHATE</scope>
    <scope>SUBUNIT</scope>
</reference>
<reference evidence="12 13 14 15" key="10">
    <citation type="journal article" date="2001" name="Acta Crystallogr. D">
        <title>Stabilization of active-site loops in NH3-dependent NAD+ synthetase from Bacillus subtilis.</title>
        <authorList>
            <person name="Devedjiev Y."/>
            <person name="Symersky J."/>
            <person name="Singh R."/>
            <person name="Jedrzejas M."/>
            <person name="Brouillette C."/>
            <person name="Brouillette W."/>
            <person name="Muccio D."/>
            <person name="Chattopadhyay D."/>
            <person name="DeLucas L."/>
        </authorList>
    </citation>
    <scope>X-RAY CRYSTALLOGRAPHY (1.9 ANGSTROMS) IN COMPLEXES WITH AMP; ATP; NAD AND DIPHOSPHATE</scope>
    <scope>SUBUNIT</scope>
</reference>
<reference evidence="16" key="11">
    <citation type="journal article" date="2002" name="Acta Crystallogr. D">
        <title>NH3-dependent NAD+ synthetase from Bacillus subtilis at 1 A resolution.</title>
        <authorList>
            <person name="Symersky J."/>
            <person name="Devedjiev Y."/>
            <person name="Moore K."/>
            <person name="Brouillette C."/>
            <person name="DeLucas L."/>
        </authorList>
    </citation>
    <scope>X-RAY CRYSTALLOGRAPHY (1.0 ANGSTROMS) IN COMPLEX WITH NICOTINAMIDE-ADENINE-DINUCLEOTIDE-ADENYLATE INTERMEDIATE AND DIPHOSPHATE</scope>
    <scope>SUBUNIT</scope>
</reference>
<keyword id="KW-0002">3D-structure</keyword>
<keyword id="KW-0067">ATP-binding</keyword>
<keyword id="KW-0903">Direct protein sequencing</keyword>
<keyword id="KW-0436">Ligase</keyword>
<keyword id="KW-0460">Magnesium</keyword>
<keyword id="KW-0479">Metal-binding</keyword>
<keyword id="KW-0520">NAD</keyword>
<keyword id="KW-0547">Nucleotide-binding</keyword>
<keyword id="KW-0597">Phosphoprotein</keyword>
<keyword id="KW-1185">Reference proteome</keyword>
<keyword id="KW-0749">Sporulation</keyword>
<keyword id="KW-0346">Stress response</keyword>
<evidence type="ECO:0000255" key="1">
    <source>
        <dbReference type="HAMAP-Rule" id="MF_00193"/>
    </source>
</evidence>
<evidence type="ECO:0000269" key="2">
    <source>
    </source>
</evidence>
<evidence type="ECO:0000269" key="3">
    <source>
    </source>
</evidence>
<evidence type="ECO:0000269" key="4">
    <source>
    </source>
</evidence>
<evidence type="ECO:0000269" key="5">
    <source>
    </source>
</evidence>
<evidence type="ECO:0000269" key="6">
    <source>
    </source>
</evidence>
<evidence type="ECO:0000269" key="7">
    <source>
    </source>
</evidence>
<evidence type="ECO:0000269" key="8">
    <source>
    </source>
</evidence>
<evidence type="ECO:0000303" key="9">
    <source>
    </source>
</evidence>
<evidence type="ECO:0000303" key="10">
    <source>
    </source>
</evidence>
<evidence type="ECO:0000305" key="11"/>
<evidence type="ECO:0007744" key="12">
    <source>
        <dbReference type="PDB" id="1EE1"/>
    </source>
</evidence>
<evidence type="ECO:0007744" key="13">
    <source>
        <dbReference type="PDB" id="1FYD"/>
    </source>
</evidence>
<evidence type="ECO:0007744" key="14">
    <source>
        <dbReference type="PDB" id="1IFX"/>
    </source>
</evidence>
<evidence type="ECO:0007744" key="15">
    <source>
        <dbReference type="PDB" id="1IH8"/>
    </source>
</evidence>
<evidence type="ECO:0007744" key="16">
    <source>
        <dbReference type="PDB" id="1KQP"/>
    </source>
</evidence>
<evidence type="ECO:0007744" key="17">
    <source>
        <dbReference type="PDB" id="1NSY"/>
    </source>
</evidence>
<evidence type="ECO:0007744" key="18">
    <source>
        <dbReference type="PDB" id="2NSY"/>
    </source>
</evidence>
<evidence type="ECO:0007829" key="19">
    <source>
        <dbReference type="PDB" id="1IH8"/>
    </source>
</evidence>
<evidence type="ECO:0007829" key="20">
    <source>
        <dbReference type="PDB" id="1KQP"/>
    </source>
</evidence>
<sequence length="272" mass="30395">MSMQEKIMRELHVKPSIDPKQEIEDRVNFLKQYVKKTGAKGFVLGISGGQDSTLAGRLAQLAVESIREEGGDAQFIAVRLPHGTQQDEDDAQLALKFIKPDKSWKFDIKSTVSAFSDQYQQETGDQLTDFNKGNVKARTRMIAQYAIGGQEGLLVLGTDHAAEAVTGFFTKYGDGGADLLPLTGLTKRQGRTLLKELGAPERLYLKEPTADLLDEKPQQSDETELGISYDEIDDYLEGKEVSAKVSEALEKRYSMTEHKRQVPASMFDDWWK</sequence>
<organism>
    <name type="scientific">Bacillus subtilis (strain 168)</name>
    <dbReference type="NCBI Taxonomy" id="224308"/>
    <lineage>
        <taxon>Bacteria</taxon>
        <taxon>Bacillati</taxon>
        <taxon>Bacillota</taxon>
        <taxon>Bacilli</taxon>
        <taxon>Bacillales</taxon>
        <taxon>Bacillaceae</taxon>
        <taxon>Bacillus</taxon>
    </lineage>
</organism>
<gene>
    <name evidence="1" type="primary">nadE</name>
    <name evidence="9" type="synonym">outB</name>
    <name type="ordered locus">BSU03130</name>
</gene>
<feature type="initiator methionine" description="Removed" evidence="4 7">
    <location>
        <position position="1"/>
    </location>
</feature>
<feature type="chain" id="PRO_0000152159" description="NH(3)-dependent NAD(+) synthetase">
    <location>
        <begin position="2"/>
        <end position="272"/>
    </location>
</feature>
<feature type="binding site" evidence="12 14 16 18">
    <location>
        <position position="33"/>
    </location>
    <ligand>
        <name>deamido-NAD(+)</name>
        <dbReference type="ChEBI" id="CHEBI:58437"/>
        <note>ligand shared between two neighboring subunits</note>
    </ligand>
</feature>
<feature type="binding site" evidence="1 12 13 15 16 17 18">
    <location>
        <begin position="45"/>
        <end position="52"/>
    </location>
    <ligand>
        <name>ATP</name>
        <dbReference type="ChEBI" id="CHEBI:30616"/>
    </ligand>
</feature>
<feature type="binding site" evidence="1 16 17 18">
    <location>
        <position position="51"/>
    </location>
    <ligand>
        <name>Mg(2+)</name>
        <dbReference type="ChEBI" id="CHEBI:18420"/>
    </ligand>
</feature>
<feature type="binding site" evidence="12 13 15 16 17 18">
    <location>
        <position position="79"/>
    </location>
    <ligand>
        <name>ATP</name>
        <dbReference type="ChEBI" id="CHEBI:30616"/>
    </ligand>
</feature>
<feature type="binding site" evidence="12 13 15 16 17 18">
    <location>
        <position position="85"/>
    </location>
    <ligand>
        <name>ATP</name>
        <dbReference type="ChEBI" id="CHEBI:30616"/>
    </ligand>
</feature>
<feature type="binding site" description="in other chain" evidence="1 12 14 16 18">
    <location>
        <position position="138"/>
    </location>
    <ligand>
        <name>deamido-NAD(+)</name>
        <dbReference type="ChEBI" id="CHEBI:58437"/>
        <note>ligand shared between two neighboring subunits</note>
    </ligand>
</feature>
<feature type="binding site" evidence="1 12 16 17 18">
    <location>
        <position position="158"/>
    </location>
    <ligand>
        <name>ATP</name>
        <dbReference type="ChEBI" id="CHEBI:30616"/>
    </ligand>
</feature>
<feature type="binding site" evidence="1 16 17 18">
    <location>
        <position position="163"/>
    </location>
    <ligand>
        <name>Mg(2+)</name>
        <dbReference type="ChEBI" id="CHEBI:18420"/>
    </ligand>
</feature>
<feature type="binding site" description="in other chain" evidence="1 12 14 16 18">
    <location>
        <position position="171"/>
    </location>
    <ligand>
        <name>deamido-NAD(+)</name>
        <dbReference type="ChEBI" id="CHEBI:58437"/>
        <note>ligand shared between two neighboring subunits</note>
    </ligand>
</feature>
<feature type="binding site" evidence="1 12 14 16 18">
    <location>
        <position position="178"/>
    </location>
    <ligand>
        <name>deamido-NAD(+)</name>
        <dbReference type="ChEBI" id="CHEBI:58437"/>
        <note>ligand shared between two neighboring subunits</note>
    </ligand>
</feature>
<feature type="binding site" evidence="1 12 13 15 16 17 18">
    <location>
        <position position="187"/>
    </location>
    <ligand>
        <name>ATP</name>
        <dbReference type="ChEBI" id="CHEBI:30616"/>
    </ligand>
</feature>
<feature type="binding site" evidence="1 12 13 15 17 18">
    <location>
        <position position="209"/>
    </location>
    <ligand>
        <name>ATP</name>
        <dbReference type="ChEBI" id="CHEBI:30616"/>
    </ligand>
</feature>
<feature type="binding site" description="in other chain" evidence="12 16 18">
    <location>
        <position position="224"/>
    </location>
    <ligand>
        <name>deamido-NAD(+)</name>
        <dbReference type="ChEBI" id="CHEBI:58437"/>
        <note>ligand shared between two neighboring subunits</note>
    </ligand>
</feature>
<feature type="binding site" description="in other chain" evidence="1 12 14 16 18">
    <location>
        <begin position="258"/>
        <end position="259"/>
    </location>
    <ligand>
        <name>deamido-NAD(+)</name>
        <dbReference type="ChEBI" id="CHEBI:58437"/>
        <note>ligand shared between two neighboring subunits</note>
    </ligand>
</feature>
<feature type="helix" evidence="20">
    <location>
        <begin position="3"/>
        <end position="11"/>
    </location>
</feature>
<feature type="helix" evidence="20">
    <location>
        <begin position="19"/>
        <end position="37"/>
    </location>
</feature>
<feature type="strand" evidence="20">
    <location>
        <begin position="41"/>
        <end position="45"/>
    </location>
</feature>
<feature type="helix" evidence="20">
    <location>
        <begin position="50"/>
        <end position="68"/>
    </location>
</feature>
<feature type="strand" evidence="20">
    <location>
        <begin position="74"/>
        <end position="79"/>
    </location>
</feature>
<feature type="strand" evidence="20">
    <location>
        <begin position="82"/>
        <end position="84"/>
    </location>
</feature>
<feature type="helix" evidence="20">
    <location>
        <begin position="88"/>
        <end position="98"/>
    </location>
</feature>
<feature type="strand" evidence="20">
    <location>
        <begin position="101"/>
        <end position="105"/>
    </location>
</feature>
<feature type="helix" evidence="20">
    <location>
        <begin position="109"/>
        <end position="123"/>
    </location>
</feature>
<feature type="helix" evidence="20">
    <location>
        <begin position="129"/>
        <end position="151"/>
    </location>
</feature>
<feature type="strand" evidence="20">
    <location>
        <begin position="154"/>
        <end position="156"/>
    </location>
</feature>
<feature type="helix" evidence="20">
    <location>
        <begin position="161"/>
        <end position="164"/>
    </location>
</feature>
<feature type="turn" evidence="20">
    <location>
        <begin position="165"/>
        <end position="167"/>
    </location>
</feature>
<feature type="turn" evidence="20">
    <location>
        <begin position="171"/>
        <end position="175"/>
    </location>
</feature>
<feature type="turn" evidence="20">
    <location>
        <begin position="181"/>
        <end position="184"/>
    </location>
</feature>
<feature type="helix" evidence="20">
    <location>
        <begin position="187"/>
        <end position="196"/>
    </location>
</feature>
<feature type="helix" evidence="20">
    <location>
        <begin position="202"/>
        <end position="205"/>
    </location>
</feature>
<feature type="strand" evidence="20">
    <location>
        <begin position="214"/>
        <end position="216"/>
    </location>
</feature>
<feature type="helix" evidence="20">
    <location>
        <begin position="221"/>
        <end position="225"/>
    </location>
</feature>
<feature type="helix" evidence="20">
    <location>
        <begin position="229"/>
        <end position="236"/>
    </location>
</feature>
<feature type="helix" evidence="20">
    <location>
        <begin position="243"/>
        <end position="255"/>
    </location>
</feature>
<feature type="helix" evidence="20">
    <location>
        <begin position="257"/>
        <end position="260"/>
    </location>
</feature>
<feature type="strand" evidence="19">
    <location>
        <begin position="261"/>
        <end position="264"/>
    </location>
</feature>
<dbReference type="EC" id="6.3.1.5" evidence="1 5"/>
<dbReference type="EMBL" id="M15811">
    <property type="protein sequence ID" value="AAA22635.1"/>
    <property type="molecule type" value="Genomic_DNA"/>
</dbReference>
<dbReference type="EMBL" id="D50453">
    <property type="protein sequence ID" value="BAA08947.1"/>
    <property type="molecule type" value="Genomic_DNA"/>
</dbReference>
<dbReference type="EMBL" id="AL009126">
    <property type="protein sequence ID" value="CAB12107.1"/>
    <property type="molecule type" value="Genomic_DNA"/>
</dbReference>
<dbReference type="PIR" id="A26936">
    <property type="entry name" value="A26936"/>
</dbReference>
<dbReference type="RefSeq" id="NP_388195.1">
    <property type="nucleotide sequence ID" value="NC_000964.3"/>
</dbReference>
<dbReference type="RefSeq" id="WP_003246440.1">
    <property type="nucleotide sequence ID" value="NZ_OZ025638.1"/>
</dbReference>
<dbReference type="PDB" id="1EE1">
    <property type="method" value="X-ray"/>
    <property type="resolution" value="2.06 A"/>
    <property type="chains" value="A/B=2-272"/>
</dbReference>
<dbReference type="PDB" id="1FYD">
    <property type="method" value="X-ray"/>
    <property type="resolution" value="2.25 A"/>
    <property type="chains" value="A/B=2-272"/>
</dbReference>
<dbReference type="PDB" id="1IFX">
    <property type="method" value="X-ray"/>
    <property type="resolution" value="2.25 A"/>
    <property type="chains" value="A/B=2-272"/>
</dbReference>
<dbReference type="PDB" id="1IH8">
    <property type="method" value="X-ray"/>
    <property type="resolution" value="1.90 A"/>
    <property type="chains" value="A/B=2-272"/>
</dbReference>
<dbReference type="PDB" id="1KQP">
    <property type="method" value="X-ray"/>
    <property type="resolution" value="1.03 A"/>
    <property type="chains" value="A/B=2-272"/>
</dbReference>
<dbReference type="PDB" id="1NSY">
    <property type="method" value="X-ray"/>
    <property type="resolution" value="2.00 A"/>
    <property type="chains" value="A/B=2-272"/>
</dbReference>
<dbReference type="PDB" id="2NSY">
    <property type="method" value="X-ray"/>
    <property type="resolution" value="2.00 A"/>
    <property type="chains" value="A/B=2-272"/>
</dbReference>
<dbReference type="PDBsum" id="1EE1"/>
<dbReference type="PDBsum" id="1FYD"/>
<dbReference type="PDBsum" id="1IFX"/>
<dbReference type="PDBsum" id="1IH8"/>
<dbReference type="PDBsum" id="1KQP"/>
<dbReference type="PDBsum" id="1NSY"/>
<dbReference type="PDBsum" id="2NSY"/>
<dbReference type="BMRB" id="P08164"/>
<dbReference type="SMR" id="P08164"/>
<dbReference type="FunCoup" id="P08164">
    <property type="interactions" value="178"/>
</dbReference>
<dbReference type="STRING" id="224308.BSU03130"/>
<dbReference type="BindingDB" id="P08164"/>
<dbReference type="ChEMBL" id="CHEMBL4615"/>
<dbReference type="DrugBank" id="DB02596">
    <property type="generic name" value="alpha,beta-Methyleneadenosine 5'-triphosphate"/>
</dbReference>
<dbReference type="DrugBank" id="DB04099">
    <property type="generic name" value="Deamido-Nad"/>
</dbReference>
<dbReference type="DrugBank" id="DB00798">
    <property type="generic name" value="Gentamicin"/>
</dbReference>
<dbReference type="jPOST" id="P08164"/>
<dbReference type="PaxDb" id="224308-BSU03130"/>
<dbReference type="EnsemblBacteria" id="CAB12107">
    <property type="protein sequence ID" value="CAB12107"/>
    <property type="gene ID" value="BSU_03130"/>
</dbReference>
<dbReference type="GeneID" id="938339"/>
<dbReference type="KEGG" id="bsu:BSU03130"/>
<dbReference type="PATRIC" id="fig|224308.179.peg.327"/>
<dbReference type="eggNOG" id="COG0171">
    <property type="taxonomic scope" value="Bacteria"/>
</dbReference>
<dbReference type="InParanoid" id="P08164"/>
<dbReference type="OrthoDB" id="9803818at2"/>
<dbReference type="PhylomeDB" id="P08164"/>
<dbReference type="BioCyc" id="BSUB:BSU03130-MONOMER"/>
<dbReference type="BRENDA" id="6.3.1.5">
    <property type="organism ID" value="658"/>
</dbReference>
<dbReference type="SABIO-RK" id="P08164"/>
<dbReference type="UniPathway" id="UPA00253">
    <property type="reaction ID" value="UER00333"/>
</dbReference>
<dbReference type="EvolutionaryTrace" id="P08164"/>
<dbReference type="Proteomes" id="UP000001570">
    <property type="component" value="Chromosome"/>
</dbReference>
<dbReference type="GO" id="GO:0005737">
    <property type="term" value="C:cytoplasm"/>
    <property type="evidence" value="ECO:0000318"/>
    <property type="project" value="GO_Central"/>
</dbReference>
<dbReference type="GO" id="GO:0005524">
    <property type="term" value="F:ATP binding"/>
    <property type="evidence" value="ECO:0007669"/>
    <property type="project" value="UniProtKB-UniRule"/>
</dbReference>
<dbReference type="GO" id="GO:0004359">
    <property type="term" value="F:glutaminase activity"/>
    <property type="evidence" value="ECO:0007669"/>
    <property type="project" value="InterPro"/>
</dbReference>
<dbReference type="GO" id="GO:0046872">
    <property type="term" value="F:metal ion binding"/>
    <property type="evidence" value="ECO:0007669"/>
    <property type="project" value="UniProtKB-KW"/>
</dbReference>
<dbReference type="GO" id="GO:0003952">
    <property type="term" value="F:NAD+ synthase (glutamine-hydrolyzing) activity"/>
    <property type="evidence" value="ECO:0007669"/>
    <property type="project" value="InterPro"/>
</dbReference>
<dbReference type="GO" id="GO:0008795">
    <property type="term" value="F:NAD+ synthase activity"/>
    <property type="evidence" value="ECO:0007669"/>
    <property type="project" value="UniProtKB-UniRule"/>
</dbReference>
<dbReference type="GO" id="GO:0009435">
    <property type="term" value="P:NAD biosynthetic process"/>
    <property type="evidence" value="ECO:0000318"/>
    <property type="project" value="GO_Central"/>
</dbReference>
<dbReference type="GO" id="GO:0030435">
    <property type="term" value="P:sporulation resulting in formation of a cellular spore"/>
    <property type="evidence" value="ECO:0007669"/>
    <property type="project" value="UniProtKB-KW"/>
</dbReference>
<dbReference type="CDD" id="cd00553">
    <property type="entry name" value="NAD_synthase"/>
    <property type="match status" value="1"/>
</dbReference>
<dbReference type="FunFam" id="3.40.50.620:FF:000015">
    <property type="entry name" value="NH(3)-dependent NAD(+) synthetase"/>
    <property type="match status" value="1"/>
</dbReference>
<dbReference type="Gene3D" id="3.40.50.620">
    <property type="entry name" value="HUPs"/>
    <property type="match status" value="1"/>
</dbReference>
<dbReference type="HAMAP" id="MF_00193">
    <property type="entry name" value="NadE_ammonia_dep"/>
    <property type="match status" value="1"/>
</dbReference>
<dbReference type="InterPro" id="IPR022310">
    <property type="entry name" value="NAD/GMP_synthase"/>
</dbReference>
<dbReference type="InterPro" id="IPR003694">
    <property type="entry name" value="NAD_synthase"/>
</dbReference>
<dbReference type="InterPro" id="IPR022926">
    <property type="entry name" value="NH(3)-dep_NAD(+)_synth"/>
</dbReference>
<dbReference type="InterPro" id="IPR014729">
    <property type="entry name" value="Rossmann-like_a/b/a_fold"/>
</dbReference>
<dbReference type="NCBIfam" id="TIGR00552">
    <property type="entry name" value="nadE"/>
    <property type="match status" value="1"/>
</dbReference>
<dbReference type="NCBIfam" id="NF001979">
    <property type="entry name" value="PRK00768.1"/>
    <property type="match status" value="1"/>
</dbReference>
<dbReference type="PANTHER" id="PTHR23090">
    <property type="entry name" value="NH 3 /GLUTAMINE-DEPENDENT NAD + SYNTHETASE"/>
    <property type="match status" value="1"/>
</dbReference>
<dbReference type="PANTHER" id="PTHR23090:SF7">
    <property type="entry name" value="NH(3)-DEPENDENT NAD(+) SYNTHETASE"/>
    <property type="match status" value="1"/>
</dbReference>
<dbReference type="Pfam" id="PF02540">
    <property type="entry name" value="NAD_synthase"/>
    <property type="match status" value="1"/>
</dbReference>
<dbReference type="SUPFAM" id="SSF52402">
    <property type="entry name" value="Adenine nucleotide alpha hydrolases-like"/>
    <property type="match status" value="1"/>
</dbReference>